<dbReference type="EC" id="2.1.1.223" evidence="1"/>
<dbReference type="EMBL" id="CP000038">
    <property type="protein sequence ID" value="AAZ89322.1"/>
    <property type="status" value="ALT_INIT"/>
    <property type="molecule type" value="Genomic_DNA"/>
</dbReference>
<dbReference type="SMR" id="Q3YYU0"/>
<dbReference type="KEGG" id="ssn:SSON_2701"/>
<dbReference type="HOGENOM" id="CLU_061983_0_0_6"/>
<dbReference type="Proteomes" id="UP000002529">
    <property type="component" value="Chromosome"/>
</dbReference>
<dbReference type="GO" id="GO:0005737">
    <property type="term" value="C:cytoplasm"/>
    <property type="evidence" value="ECO:0007669"/>
    <property type="project" value="UniProtKB-SubCell"/>
</dbReference>
<dbReference type="GO" id="GO:0003676">
    <property type="term" value="F:nucleic acid binding"/>
    <property type="evidence" value="ECO:0007669"/>
    <property type="project" value="InterPro"/>
</dbReference>
<dbReference type="GO" id="GO:0016430">
    <property type="term" value="F:tRNA (adenine-N6)-methyltransferase activity"/>
    <property type="evidence" value="ECO:0007669"/>
    <property type="project" value="UniProtKB-UniRule"/>
</dbReference>
<dbReference type="GO" id="GO:0032259">
    <property type="term" value="P:methylation"/>
    <property type="evidence" value="ECO:0007669"/>
    <property type="project" value="UniProtKB-KW"/>
</dbReference>
<dbReference type="GO" id="GO:0008033">
    <property type="term" value="P:tRNA processing"/>
    <property type="evidence" value="ECO:0007669"/>
    <property type="project" value="UniProtKB-UniRule"/>
</dbReference>
<dbReference type="CDD" id="cd02440">
    <property type="entry name" value="AdoMet_MTases"/>
    <property type="match status" value="1"/>
</dbReference>
<dbReference type="FunFam" id="3.40.50.150:FF:000087">
    <property type="entry name" value="tRNA1(Val) (adenine(37)-N6)-methyltransferase"/>
    <property type="match status" value="1"/>
</dbReference>
<dbReference type="Gene3D" id="3.40.50.150">
    <property type="entry name" value="Vaccinia Virus protein VP39"/>
    <property type="match status" value="1"/>
</dbReference>
<dbReference type="HAMAP" id="MF_01872">
    <property type="entry name" value="tRNA_methyltr_YfiC"/>
    <property type="match status" value="1"/>
</dbReference>
<dbReference type="InterPro" id="IPR002052">
    <property type="entry name" value="DNA_methylase_N6_adenine_CS"/>
</dbReference>
<dbReference type="InterPro" id="IPR029063">
    <property type="entry name" value="SAM-dependent_MTases_sf"/>
</dbReference>
<dbReference type="InterPro" id="IPR007848">
    <property type="entry name" value="Small_mtfrase_dom"/>
</dbReference>
<dbReference type="InterPro" id="IPR050210">
    <property type="entry name" value="tRNA_Adenine-N(6)_MTase"/>
</dbReference>
<dbReference type="InterPro" id="IPR022882">
    <property type="entry name" value="tRNA_adenine-N6_MeTrfase"/>
</dbReference>
<dbReference type="NCBIfam" id="NF047853">
    <property type="entry name" value="tRm6a37MtseTrmN"/>
    <property type="match status" value="1"/>
</dbReference>
<dbReference type="PANTHER" id="PTHR47739">
    <property type="entry name" value="TRNA1(VAL) (ADENINE(37)-N6)-METHYLTRANSFERASE"/>
    <property type="match status" value="1"/>
</dbReference>
<dbReference type="PANTHER" id="PTHR47739:SF1">
    <property type="entry name" value="TRNA1(VAL) (ADENINE(37)-N6)-METHYLTRANSFERASE"/>
    <property type="match status" value="1"/>
</dbReference>
<dbReference type="Pfam" id="PF05175">
    <property type="entry name" value="MTS"/>
    <property type="match status" value="1"/>
</dbReference>
<dbReference type="SUPFAM" id="SSF53335">
    <property type="entry name" value="S-adenosyl-L-methionine-dependent methyltransferases"/>
    <property type="match status" value="1"/>
</dbReference>
<dbReference type="PROSITE" id="PS00092">
    <property type="entry name" value="N6_MTASE"/>
    <property type="match status" value="1"/>
</dbReference>
<protein>
    <recommendedName>
        <fullName evidence="1">tRNA1(Val) (adenine(37)-N6)-methyltransferase</fullName>
        <ecNumber evidence="1">2.1.1.223</ecNumber>
    </recommendedName>
    <alternativeName>
        <fullName evidence="1">tRNA m6A37 methyltransferase</fullName>
    </alternativeName>
</protein>
<sequence>MSQSTSVLRRNGFTFKQFFVAHDRCAMKVGTDGILLGAWAPVAGVKRCLDIGAGSGLLALMLAQRTSDSVIIDAVELESEAAAQAQENINQSPWAERINVHTADIQQWLTQQTVRFDLIISNPPYYQQGVECATPQREQARYTTTLDHPSLLTCAAECITEEGFFCVVLPEQVGNGFTELALSMGWHLRLRTDVAENEARLPHRVLLAFSPQAGECFSDRLVIRGPDQNYSEAYTALTQAFYLFM</sequence>
<name>TRMN6_SHISS</name>
<evidence type="ECO:0000255" key="1">
    <source>
        <dbReference type="HAMAP-Rule" id="MF_01872"/>
    </source>
</evidence>
<evidence type="ECO:0000305" key="2"/>
<organism>
    <name type="scientific">Shigella sonnei (strain Ss046)</name>
    <dbReference type="NCBI Taxonomy" id="300269"/>
    <lineage>
        <taxon>Bacteria</taxon>
        <taxon>Pseudomonadati</taxon>
        <taxon>Pseudomonadota</taxon>
        <taxon>Gammaproteobacteria</taxon>
        <taxon>Enterobacterales</taxon>
        <taxon>Enterobacteriaceae</taxon>
        <taxon>Shigella</taxon>
    </lineage>
</organism>
<keyword id="KW-0963">Cytoplasm</keyword>
<keyword id="KW-0489">Methyltransferase</keyword>
<keyword id="KW-1185">Reference proteome</keyword>
<keyword id="KW-0949">S-adenosyl-L-methionine</keyword>
<keyword id="KW-0808">Transferase</keyword>
<keyword id="KW-0819">tRNA processing</keyword>
<feature type="chain" id="PRO_0000387438" description="tRNA1(Val) (adenine(37)-N6)-methyltransferase">
    <location>
        <begin position="1"/>
        <end position="245"/>
    </location>
</feature>
<accession>Q3YYU0</accession>
<proteinExistence type="inferred from homology"/>
<reference key="1">
    <citation type="journal article" date="2005" name="Nucleic Acids Res.">
        <title>Genome dynamics and diversity of Shigella species, the etiologic agents of bacillary dysentery.</title>
        <authorList>
            <person name="Yang F."/>
            <person name="Yang J."/>
            <person name="Zhang X."/>
            <person name="Chen L."/>
            <person name="Jiang Y."/>
            <person name="Yan Y."/>
            <person name="Tang X."/>
            <person name="Wang J."/>
            <person name="Xiong Z."/>
            <person name="Dong J."/>
            <person name="Xue Y."/>
            <person name="Zhu Y."/>
            <person name="Xu X."/>
            <person name="Sun L."/>
            <person name="Chen S."/>
            <person name="Nie H."/>
            <person name="Peng J."/>
            <person name="Xu J."/>
            <person name="Wang Y."/>
            <person name="Yuan Z."/>
            <person name="Wen Y."/>
            <person name="Yao Z."/>
            <person name="Shen Y."/>
            <person name="Qiang B."/>
            <person name="Hou Y."/>
            <person name="Yu J."/>
            <person name="Jin Q."/>
        </authorList>
    </citation>
    <scope>NUCLEOTIDE SEQUENCE [LARGE SCALE GENOMIC DNA]</scope>
    <source>
        <strain>Ss046</strain>
    </source>
</reference>
<gene>
    <name evidence="1" type="primary">yfiC</name>
    <name type="ordered locus">SSON_2701</name>
</gene>
<comment type="function">
    <text evidence="1">Specifically methylates the adenine in position 37 of tRNA(1)(Val) (anticodon cmo5UAC).</text>
</comment>
<comment type="catalytic activity">
    <reaction evidence="1">
        <text>adenosine(37) in tRNA1(Val) + S-adenosyl-L-methionine = N(6)-methyladenosine(37) in tRNA1(Val) + S-adenosyl-L-homocysteine + H(+)</text>
        <dbReference type="Rhea" id="RHEA:43160"/>
        <dbReference type="Rhea" id="RHEA-COMP:10369"/>
        <dbReference type="Rhea" id="RHEA-COMP:10370"/>
        <dbReference type="ChEBI" id="CHEBI:15378"/>
        <dbReference type="ChEBI" id="CHEBI:57856"/>
        <dbReference type="ChEBI" id="CHEBI:59789"/>
        <dbReference type="ChEBI" id="CHEBI:74411"/>
        <dbReference type="ChEBI" id="CHEBI:74449"/>
        <dbReference type="EC" id="2.1.1.223"/>
    </reaction>
</comment>
<comment type="subcellular location">
    <subcellularLocation>
        <location evidence="1">Cytoplasm</location>
    </subcellularLocation>
</comment>
<comment type="similarity">
    <text evidence="1">Belongs to the methyltransferase superfamily. tRNA (adenine-N(6)-)-methyltransferase family.</text>
</comment>
<comment type="sequence caution" evidence="2">
    <conflict type="erroneous initiation">
        <sequence resource="EMBL-CDS" id="AAZ89322"/>
    </conflict>
</comment>